<name>KCC3_CAEEL</name>
<feature type="chain" id="PRO_0000065395" description="Potassium/chloride cotransporter 3">
    <location>
        <begin position="1"/>
        <end position="1070"/>
    </location>
</feature>
<feature type="transmembrane region" description="Helical" evidence="1">
    <location>
        <begin position="92"/>
        <end position="112"/>
    </location>
</feature>
<feature type="transmembrane region" description="Helical" evidence="1">
    <location>
        <begin position="114"/>
        <end position="134"/>
    </location>
</feature>
<feature type="transmembrane region" description="Helical" evidence="1">
    <location>
        <begin position="142"/>
        <end position="162"/>
    </location>
</feature>
<feature type="transmembrane region" description="Helical" evidence="1">
    <location>
        <begin position="174"/>
        <end position="194"/>
    </location>
</feature>
<feature type="transmembrane region" description="Helical" evidence="1">
    <location>
        <begin position="196"/>
        <end position="216"/>
    </location>
</feature>
<feature type="transmembrane region" description="Helical" evidence="1">
    <location>
        <begin position="228"/>
        <end position="248"/>
    </location>
</feature>
<feature type="transmembrane region" description="Helical" evidence="1">
    <location>
        <begin position="251"/>
        <end position="271"/>
    </location>
</feature>
<feature type="transmembrane region" description="Helical" evidence="1">
    <location>
        <begin position="400"/>
        <end position="420"/>
    </location>
</feature>
<feature type="transmembrane region" description="Helical" evidence="1">
    <location>
        <begin position="433"/>
        <end position="453"/>
    </location>
</feature>
<feature type="transmembrane region" description="Helical" evidence="1">
    <location>
        <begin position="473"/>
        <end position="493"/>
    </location>
</feature>
<feature type="transmembrane region" description="Helical" evidence="1">
    <location>
        <begin position="534"/>
        <end position="554"/>
    </location>
</feature>
<feature type="transmembrane region" description="Helical" evidence="1">
    <location>
        <begin position="557"/>
        <end position="577"/>
    </location>
</feature>
<feature type="transmembrane region" description="Helical" evidence="1">
    <location>
        <begin position="600"/>
        <end position="620"/>
    </location>
</feature>
<feature type="transmembrane region" description="Helical" evidence="1">
    <location>
        <begin position="791"/>
        <end position="811"/>
    </location>
</feature>
<feature type="transmembrane region" description="Helical" evidence="1">
    <location>
        <begin position="827"/>
        <end position="847"/>
    </location>
</feature>
<feature type="mutagenesis site" description="In nj90; defects in thermotaxis." evidence="2">
    <original>G</original>
    <variation>D</variation>
    <location>
        <position position="122"/>
    </location>
</feature>
<feature type="mutagenesis site" description="In nj94; defects in thermotaxis." evidence="2">
    <original>G</original>
    <variation>D</variation>
    <location>
        <position position="602"/>
    </location>
</feature>
<feature type="mutagenesis site" description="In nj100; defects in thermotaxis." evidence="2">
    <original>G</original>
    <variation>E</variation>
    <location>
        <position position="769"/>
    </location>
</feature>
<proteinExistence type="evidence at protein level"/>
<reference key="1">
    <citation type="journal article" date="1998" name="Science">
        <title>Genome sequence of the nematode C. elegans: a platform for investigating biology.</title>
        <authorList>
            <consortium name="The C. elegans sequencing consortium"/>
        </authorList>
    </citation>
    <scope>NUCLEOTIDE SEQUENCE [LARGE SCALE GENOMIC DNA]</scope>
    <source>
        <strain>Bristol N2</strain>
    </source>
</reference>
<reference key="2">
    <citation type="journal article" date="2016" name="Cell">
        <title>A glial K/Cl transporter controls neuronal receptive ending shape by chloride inhibition of an rGC.</title>
        <authorList>
            <person name="Singhvi A."/>
            <person name="Liu B."/>
            <person name="Friedman C.J."/>
            <person name="Fong J."/>
            <person name="Lu Y."/>
            <person name="Huang X.Y."/>
            <person name="Shaham S."/>
        </authorList>
    </citation>
    <scope>FUNCTION</scope>
    <scope>SUBCELLULAR LOCATION</scope>
    <scope>TISSUE SPECIFICITY</scope>
</reference>
<reference key="3">
    <citation type="journal article" date="2016" name="Genes Brain Behav.">
        <title>A glial K(+) /Cl(-) cotransporter modifies temperature-evoked dynamics in Caenorhabditis elegans sensory neurons.</title>
        <authorList>
            <person name="Yoshida A."/>
            <person name="Nakano S."/>
            <person name="Suzuki T."/>
            <person name="Ihara K."/>
            <person name="Higashiyama T."/>
            <person name="Mori I."/>
        </authorList>
    </citation>
    <scope>FUNCTION</scope>
    <scope>TISSUE SPECIFICITY</scope>
    <scope>MUTAGENESIS OF GLY-122; GLY-602 AND GLY-769</scope>
</reference>
<evidence type="ECO:0000255" key="1"/>
<evidence type="ECO:0000269" key="2">
    <source>
    </source>
</evidence>
<evidence type="ECO:0000269" key="3">
    <source>
    </source>
</evidence>
<evidence type="ECO:0000303" key="4">
    <source>
    </source>
</evidence>
<evidence type="ECO:0000305" key="5"/>
<evidence type="ECO:0000305" key="6">
    <source>
    </source>
</evidence>
<organism>
    <name type="scientific">Caenorhabditis elegans</name>
    <dbReference type="NCBI Taxonomy" id="6239"/>
    <lineage>
        <taxon>Eukaryota</taxon>
        <taxon>Metazoa</taxon>
        <taxon>Ecdysozoa</taxon>
        <taxon>Nematoda</taxon>
        <taxon>Chromadorea</taxon>
        <taxon>Rhabditida</taxon>
        <taxon>Rhabditina</taxon>
        <taxon>Rhabditomorpha</taxon>
        <taxon>Rhabditoidea</taxon>
        <taxon>Rhabditidae</taxon>
        <taxon>Peloderinae</taxon>
        <taxon>Caenorhabditis</taxon>
    </lineage>
</organism>
<gene>
    <name type="primary">kcc-3</name>
    <name type="ORF">K02A2.3</name>
</gene>
<keyword id="KW-1003">Cell membrane</keyword>
<keyword id="KW-0868">Chloride</keyword>
<keyword id="KW-0406">Ion transport</keyword>
<keyword id="KW-0472">Membrane</keyword>
<keyword id="KW-0630">Potassium</keyword>
<keyword id="KW-0633">Potassium transport</keyword>
<keyword id="KW-1185">Reference proteome</keyword>
<keyword id="KW-0769">Symport</keyword>
<keyword id="KW-0812">Transmembrane</keyword>
<keyword id="KW-1133">Transmembrane helix</keyword>
<keyword id="KW-0813">Transport</keyword>
<dbReference type="EMBL" id="FO080416">
    <property type="protein sequence ID" value="CCD63538.2"/>
    <property type="molecule type" value="Genomic_DNA"/>
</dbReference>
<dbReference type="PIR" id="G88208">
    <property type="entry name" value="G88208"/>
</dbReference>
<dbReference type="RefSeq" id="NP_001338797.1">
    <property type="nucleotide sequence ID" value="NM_001351920.4"/>
</dbReference>
<dbReference type="SMR" id="Q09573"/>
<dbReference type="FunCoup" id="Q09573">
    <property type="interactions" value="47"/>
</dbReference>
<dbReference type="STRING" id="6239.K02A2.3b.1"/>
<dbReference type="PaxDb" id="6239-K02A2.3"/>
<dbReference type="PeptideAtlas" id="Q09573"/>
<dbReference type="EnsemblMetazoa" id="K02A2.3a.1">
    <property type="protein sequence ID" value="K02A2.3a.1"/>
    <property type="gene ID" value="WBGene00019289"/>
</dbReference>
<dbReference type="GeneID" id="174212"/>
<dbReference type="UCSC" id="H16O14.1">
    <property type="organism name" value="c. elegans"/>
</dbReference>
<dbReference type="AGR" id="WB:WBGene00019289"/>
<dbReference type="WormBase" id="K02A2.3a">
    <property type="protein sequence ID" value="CE52024"/>
    <property type="gene ID" value="WBGene00019289"/>
    <property type="gene designation" value="kcc-3"/>
</dbReference>
<dbReference type="eggNOG" id="KOG2082">
    <property type="taxonomic scope" value="Eukaryota"/>
</dbReference>
<dbReference type="HOGENOM" id="CLU_001883_1_1_1"/>
<dbReference type="InParanoid" id="Q09573"/>
<dbReference type="PhylomeDB" id="Q09573"/>
<dbReference type="Reactome" id="R-CEL-426117">
    <property type="pathway name" value="Cation-coupled Chloride cotransporters"/>
</dbReference>
<dbReference type="PRO" id="PR:Q09573"/>
<dbReference type="Proteomes" id="UP000001940">
    <property type="component" value="Chromosome II"/>
</dbReference>
<dbReference type="Bgee" id="WBGene00019289">
    <property type="expression patterns" value="Expressed in embryo and 3 other cell types or tissues"/>
</dbReference>
<dbReference type="ExpressionAtlas" id="Q09573">
    <property type="expression patterns" value="baseline and differential"/>
</dbReference>
<dbReference type="GO" id="GO:0016324">
    <property type="term" value="C:apical plasma membrane"/>
    <property type="evidence" value="ECO:0000314"/>
    <property type="project" value="WormBase"/>
</dbReference>
<dbReference type="GO" id="GO:0005886">
    <property type="term" value="C:plasma membrane"/>
    <property type="evidence" value="ECO:0000318"/>
    <property type="project" value="GO_Central"/>
</dbReference>
<dbReference type="GO" id="GO:0045202">
    <property type="term" value="C:synapse"/>
    <property type="evidence" value="ECO:0007669"/>
    <property type="project" value="GOC"/>
</dbReference>
<dbReference type="GO" id="GO:0015379">
    <property type="term" value="F:potassium:chloride symporter activity"/>
    <property type="evidence" value="ECO:0000318"/>
    <property type="project" value="GO_Central"/>
</dbReference>
<dbReference type="GO" id="GO:0006884">
    <property type="term" value="P:cell volume homeostasis"/>
    <property type="evidence" value="ECO:0000318"/>
    <property type="project" value="GO_Central"/>
</dbReference>
<dbReference type="GO" id="GO:0007268">
    <property type="term" value="P:chemical synaptic transmission"/>
    <property type="evidence" value="ECO:0000318"/>
    <property type="project" value="GO_Central"/>
</dbReference>
<dbReference type="GO" id="GO:0055064">
    <property type="term" value="P:chloride ion homeostasis"/>
    <property type="evidence" value="ECO:0000318"/>
    <property type="project" value="GO_Central"/>
</dbReference>
<dbReference type="GO" id="GO:1902476">
    <property type="term" value="P:chloride transmembrane transport"/>
    <property type="evidence" value="ECO:0000318"/>
    <property type="project" value="GO_Central"/>
</dbReference>
<dbReference type="GO" id="GO:0032528">
    <property type="term" value="P:microvillus organization"/>
    <property type="evidence" value="ECO:0000315"/>
    <property type="project" value="WormBase"/>
</dbReference>
<dbReference type="GO" id="GO:0055075">
    <property type="term" value="P:potassium ion homeostasis"/>
    <property type="evidence" value="ECO:0000318"/>
    <property type="project" value="GO_Central"/>
</dbReference>
<dbReference type="GO" id="GO:1990573">
    <property type="term" value="P:potassium ion import across plasma membrane"/>
    <property type="evidence" value="ECO:0000318"/>
    <property type="project" value="GO_Central"/>
</dbReference>
<dbReference type="Gene3D" id="1.20.1740.10">
    <property type="entry name" value="Amino acid/polyamine transporter I"/>
    <property type="match status" value="1"/>
</dbReference>
<dbReference type="InterPro" id="IPR004841">
    <property type="entry name" value="AA-permease/SLC12A_dom"/>
</dbReference>
<dbReference type="InterPro" id="IPR018491">
    <property type="entry name" value="SLC12_C"/>
</dbReference>
<dbReference type="InterPro" id="IPR004842">
    <property type="entry name" value="SLC12A_fam"/>
</dbReference>
<dbReference type="PANTHER" id="PTHR11827:SF55">
    <property type="entry name" value="POTASSIUM_CHLORIDE COTRANSPORTER 3"/>
    <property type="match status" value="1"/>
</dbReference>
<dbReference type="PANTHER" id="PTHR11827">
    <property type="entry name" value="SOLUTE CARRIER FAMILY 12, CATION COTRANSPORTERS"/>
    <property type="match status" value="1"/>
</dbReference>
<dbReference type="Pfam" id="PF00324">
    <property type="entry name" value="AA_permease"/>
    <property type="match status" value="2"/>
</dbReference>
<dbReference type="Pfam" id="PF03522">
    <property type="entry name" value="SLC12"/>
    <property type="match status" value="1"/>
</dbReference>
<sequence>MSNARRRFSTVTQINTEGLQAMGKGGGRMETVGEDGIPADYKGNRKFTTSLGHLALYKEDEGIGTQASFISGYTTPGPKERATSEHVKANLGVMLGVYLPTIQHILGVTMFIRLFWVVGMSGVAWTMALLAICCLSTLLTSISLSAVATNGVVESGGAYFIISRNLGAEFGSAVGILFYLANTVAASMYIVGGVEVILMYLWPEMAIGGADALHDTEMFGSLYNNLRLYGTVFLLIQALIVAMGVKFVQLLAPVSLMCVILAIAACIGGGIEKQITMEGMKVCAIDNHLLQSSIVTHPIHKNQTSWFNETVDFCNLCDKSLYLESVFCANVNNDEASAEDDVFCTHYTSKKMTCQLAFPGFNMKTLNDNMWPEYMEKSEVVPGVRGKETAEVVQDESSTFFMLMAIYFPAVTGIFTGTNMSGDLRDPQRSIPVGTIAATLTTSAIYYILAILFGGSITRSVLRDKFGRSIGNTMVVAALSWPHPAVVTVGAFLSTFGAALQCLCSAPRLLQSIAKDDVIPILAPFARVTKNNEPFLGLVLTVIIAECGILLGAVDKIAEVLDFFFLMCYAFVNLIAVLHSVLKSPNWRPRFKYFHWTLSLLGAALCFFIMFASSVPLACIACTATAVIYKYVEWKGAKKEWGDGMRGLALTTAQYSLLKVEDKDPHPKNWRPQVLILLTSQWSKEMIDRRAVSMLNLGAQLKAGRGLAIACAFLKGSVDSQKDKNRARDVKTTLVKDMSSVRLRGFAKTMFYNNHQINGTISGLYQSIGIGGLRPNTILLNWPNEKNPDELVLFAEEIIHGAANDNCLIVTKGITDFPEYSERLTGFIDIWWIVQDGGILMLIAYLLRQHKVWKGCTLRIFAVSEQDSTKSEDMKAGLQKYIYMLRIDAELFIVDLLDMEVSDEVVEKAAEVERKQKEREEMRRSKSGYLNDGFMEDNGKPRQVMMRHSDSARSFSPQPGAHTSINLDETETSFTESLFDDFYRSGTPNEDLEGAMKLNIHKMNTSVRLNRVIRENSPDSQLILLNLPSPPRNRLAFNNSYMTYLDVLTEDLPRVLFIGGSGREVITIDS</sequence>
<accession>Q09573</accession>
<comment type="function">
    <text evidence="2 3">Probable potassium/chloride cotransporter that functions in the amphid sheath glial cells to regulate thermotaxis behavior (PubMed:26463820, PubMed:27062922). By maintaining chloride homeostasis, negatively regulates guanylate cyclase gcy-8 in the thermosensory AFD neurons and thereby controls the microvilli receptive ending morphology of the AFD neurons and thermotaxis (PubMed:27062922). Modulates the temperature-evoked neuronal activity of the AFD neurons such as calcium responses to temperature gradients (PubMed:26463820). Might also play a role in the chemotaxis behavior mediated by the sensory neurons AWA and AWC (PubMed:26463820).</text>
</comment>
<comment type="subcellular location">
    <subcellularLocation>
        <location evidence="6">Cell membrane</location>
        <topology evidence="5">Multi-pass membrane protein</topology>
    </subcellularLocation>
    <text evidence="3">Localizes to the amphid sheath glia apical domain in which the AFD microvilli are embedded.</text>
</comment>
<comment type="tissue specificity">
    <text evidence="2 3">Expressed in the amphid sheath glia and the cephalic sheath glia (PubMed:26463820, PubMed:27062922). Also expressed in the inner labial and outer labial sheath and socket glia and as well as phasmid sheath glia (PubMed:26463820).</text>
</comment>
<protein>
    <recommendedName>
        <fullName evidence="4">Potassium/chloride cotransporter 3</fullName>
    </recommendedName>
</protein>